<geneLocation type="mitochondrion"/>
<accession>P48875</accession>
<dbReference type="EMBL" id="Z47547">
    <property type="protein sequence ID" value="CAA87609.1"/>
    <property type="molecule type" value="Genomic_DNA"/>
</dbReference>
<dbReference type="PIR" id="S59093">
    <property type="entry name" value="S59093"/>
</dbReference>
<dbReference type="RefSeq" id="NP_062486.1">
    <property type="nucleotide sequence ID" value="NC_001677.2"/>
</dbReference>
<dbReference type="SMR" id="P48875"/>
<dbReference type="GeneID" id="809391"/>
<dbReference type="KEGG" id="ccp:ChcroMp07"/>
<dbReference type="GO" id="GO:0005743">
    <property type="term" value="C:mitochondrial inner membrane"/>
    <property type="evidence" value="ECO:0007669"/>
    <property type="project" value="UniProtKB-SubCell"/>
</dbReference>
<dbReference type="GO" id="GO:0045275">
    <property type="term" value="C:respiratory chain complex III"/>
    <property type="evidence" value="ECO:0007669"/>
    <property type="project" value="InterPro"/>
</dbReference>
<dbReference type="GO" id="GO:0046872">
    <property type="term" value="F:metal ion binding"/>
    <property type="evidence" value="ECO:0007669"/>
    <property type="project" value="UniProtKB-KW"/>
</dbReference>
<dbReference type="GO" id="GO:0008121">
    <property type="term" value="F:ubiquinol-cytochrome-c reductase activity"/>
    <property type="evidence" value="ECO:0007669"/>
    <property type="project" value="InterPro"/>
</dbReference>
<dbReference type="GO" id="GO:0006122">
    <property type="term" value="P:mitochondrial electron transport, ubiquinol to cytochrome c"/>
    <property type="evidence" value="ECO:0007669"/>
    <property type="project" value="TreeGrafter"/>
</dbReference>
<dbReference type="CDD" id="cd00290">
    <property type="entry name" value="cytochrome_b_C"/>
    <property type="match status" value="1"/>
</dbReference>
<dbReference type="CDD" id="cd00284">
    <property type="entry name" value="Cytochrome_b_N"/>
    <property type="match status" value="1"/>
</dbReference>
<dbReference type="FunFam" id="1.20.810.10:FF:000002">
    <property type="entry name" value="Cytochrome b"/>
    <property type="match status" value="1"/>
</dbReference>
<dbReference type="Gene3D" id="1.20.810.10">
    <property type="entry name" value="Cytochrome Bc1 Complex, Chain C"/>
    <property type="match status" value="1"/>
</dbReference>
<dbReference type="InterPro" id="IPR005798">
    <property type="entry name" value="Cyt_b/b6_C"/>
</dbReference>
<dbReference type="InterPro" id="IPR036150">
    <property type="entry name" value="Cyt_b/b6_C_sf"/>
</dbReference>
<dbReference type="InterPro" id="IPR005797">
    <property type="entry name" value="Cyt_b/b6_N"/>
</dbReference>
<dbReference type="InterPro" id="IPR027387">
    <property type="entry name" value="Cytb/b6-like_sf"/>
</dbReference>
<dbReference type="InterPro" id="IPR030689">
    <property type="entry name" value="Cytochrome_b"/>
</dbReference>
<dbReference type="InterPro" id="IPR048260">
    <property type="entry name" value="Cytochrome_b_C_euk/bac"/>
</dbReference>
<dbReference type="InterPro" id="IPR048259">
    <property type="entry name" value="Cytochrome_b_N_euk/bac"/>
</dbReference>
<dbReference type="InterPro" id="IPR016174">
    <property type="entry name" value="Di-haem_cyt_TM"/>
</dbReference>
<dbReference type="PANTHER" id="PTHR19271">
    <property type="entry name" value="CYTOCHROME B"/>
    <property type="match status" value="1"/>
</dbReference>
<dbReference type="PANTHER" id="PTHR19271:SF16">
    <property type="entry name" value="CYTOCHROME B"/>
    <property type="match status" value="1"/>
</dbReference>
<dbReference type="Pfam" id="PF00032">
    <property type="entry name" value="Cytochrom_B_C"/>
    <property type="match status" value="1"/>
</dbReference>
<dbReference type="Pfam" id="PF00033">
    <property type="entry name" value="Cytochrome_B"/>
    <property type="match status" value="1"/>
</dbReference>
<dbReference type="PIRSF" id="PIRSF038885">
    <property type="entry name" value="COB"/>
    <property type="match status" value="1"/>
</dbReference>
<dbReference type="SUPFAM" id="SSF81648">
    <property type="entry name" value="a domain/subunit of cytochrome bc1 complex (Ubiquinol-cytochrome c reductase)"/>
    <property type="match status" value="1"/>
</dbReference>
<dbReference type="SUPFAM" id="SSF81342">
    <property type="entry name" value="Transmembrane di-heme cytochromes"/>
    <property type="match status" value="1"/>
</dbReference>
<dbReference type="PROSITE" id="PS51003">
    <property type="entry name" value="CYTB_CTER"/>
    <property type="match status" value="1"/>
</dbReference>
<dbReference type="PROSITE" id="PS51002">
    <property type="entry name" value="CYTB_NTER"/>
    <property type="match status" value="1"/>
</dbReference>
<reference key="1">
    <citation type="journal article" date="1995" name="J. Mol. Biol.">
        <title>Complete sequence of the mitochondrial DNA of the rhodophyte Chondrus crispus (Gigartinales). Gene content and genome organization.</title>
        <authorList>
            <person name="Leblanc C."/>
            <person name="Boyen C."/>
            <person name="Richard O."/>
            <person name="Bonnard G."/>
            <person name="Grienenberger J.-M."/>
            <person name="Kloareg B."/>
        </authorList>
    </citation>
    <scope>NUCLEOTIDE SEQUENCE [GENOMIC DNA]</scope>
    <source>
        <tissue>Apices</tissue>
    </source>
</reference>
<gene>
    <name type="primary">MT-CYB</name>
    <name type="synonym">COB</name>
    <name type="synonym">CYTB</name>
    <name type="synonym">MTCYB</name>
</gene>
<protein>
    <recommendedName>
        <fullName>Cytochrome b</fullName>
    </recommendedName>
    <alternativeName>
        <fullName>Complex III subunit 3</fullName>
    </alternativeName>
    <alternativeName>
        <fullName>Complex III subunit III</fullName>
    </alternativeName>
    <alternativeName>
        <fullName>Cytochrome b-c1 complex subunit 3</fullName>
    </alternativeName>
    <alternativeName>
        <fullName>Ubiquinol-cytochrome-c reductase complex cytochrome b subunit</fullName>
    </alternativeName>
</protein>
<evidence type="ECO:0000250" key="1"/>
<evidence type="ECO:0000250" key="2">
    <source>
        <dbReference type="UniProtKB" id="P00157"/>
    </source>
</evidence>
<evidence type="ECO:0000250" key="3">
    <source>
        <dbReference type="UniProtKB" id="P00163"/>
    </source>
</evidence>
<evidence type="ECO:0000255" key="4">
    <source>
        <dbReference type="PROSITE-ProRule" id="PRU00967"/>
    </source>
</evidence>
<evidence type="ECO:0000255" key="5">
    <source>
        <dbReference type="PROSITE-ProRule" id="PRU00968"/>
    </source>
</evidence>
<comment type="function">
    <text evidence="3">Component of the ubiquinol-cytochrome c reductase complex (complex III or cytochrome b-c1 complex) that is part of the mitochondrial respiratory chain. The b-c1 complex mediates electron transfer from ubiquinol to cytochrome c. Contributes to the generation of a proton gradient across the mitochondrial membrane that is then used for ATP synthesis.</text>
</comment>
<comment type="cofactor">
    <cofactor evidence="3">
        <name>heme b</name>
        <dbReference type="ChEBI" id="CHEBI:60344"/>
    </cofactor>
    <text evidence="3">Binds 2 heme b groups non-covalently.</text>
</comment>
<comment type="subunit">
    <text evidence="1">The main subunits of complex b-c1 are: cytochrome b, cytochrome c1 and the Rieske protein.</text>
</comment>
<comment type="subcellular location">
    <subcellularLocation>
        <location evidence="3">Mitochondrion inner membrane</location>
        <topology evidence="3">Multi-pass membrane protein</topology>
    </subcellularLocation>
</comment>
<comment type="miscellaneous">
    <text evidence="1">Heme 1 (or BL or b562) is low-potential and absorbs at about 562 nm, and heme 2 (or BH or b566) is high-potential and absorbs at about 566 nm.</text>
</comment>
<comment type="similarity">
    <text evidence="4 5">Belongs to the cytochrome b family.</text>
</comment>
<comment type="caution">
    <text evidence="3">The protein contains only eight transmembrane helices, not nine as predicted by bioinformatics tools.</text>
</comment>
<keyword id="KW-0249">Electron transport</keyword>
<keyword id="KW-0349">Heme</keyword>
<keyword id="KW-0408">Iron</keyword>
<keyword id="KW-0472">Membrane</keyword>
<keyword id="KW-0479">Metal-binding</keyword>
<keyword id="KW-0496">Mitochondrion</keyword>
<keyword id="KW-0999">Mitochondrion inner membrane</keyword>
<keyword id="KW-0679">Respiratory chain</keyword>
<keyword id="KW-0812">Transmembrane</keyword>
<keyword id="KW-1133">Transmembrane helix</keyword>
<keyword id="KW-0813">Transport</keyword>
<keyword id="KW-0830">Ubiquinone</keyword>
<organism>
    <name type="scientific">Chondrus crispus</name>
    <name type="common">Carrageen Irish moss</name>
    <name type="synonym">Polymorpha crispa</name>
    <dbReference type="NCBI Taxonomy" id="2769"/>
    <lineage>
        <taxon>Eukaryota</taxon>
        <taxon>Rhodophyta</taxon>
        <taxon>Florideophyceae</taxon>
        <taxon>Rhodymeniophycidae</taxon>
        <taxon>Gigartinales</taxon>
        <taxon>Gigartinaceae</taxon>
        <taxon>Chondrus</taxon>
    </lineage>
</organism>
<sequence>MRFIKRPLISIVNDHLIDYPTPINIHYAWNFGFLSSICLIVQILTGIFLAMHYTPHVDLAFASVEHIMRDVNYGWLLRYIHTNGASMFFIVVYIHIFRGLYFGSYIKPRHWVWVIGVLILLLMILTAFIGYVLPWGQMSLWGATVITNLVSAVPFIGDSIVTWLWGGFSVDNATLNRFFSLHYLMPFVIAAVSLVHLAILHQDGSGNPLGIDSNVDKVSMFPYFIVKDFLGMVIFIIFFSIFVYFSPNVLGHPDNYIEANPMVTPAHIVPEWYFLPFYAILRSIPHKLGGVTAMISAIAILAFLPWIHSTEIRSSRFRPLYRLFYWVMISCCLILGWIGGMPVENPYVIIGQIASIYYFIYFIILLPVLGRIEKFLLEFKI</sequence>
<feature type="chain" id="PRO_0000060784" description="Cytochrome b">
    <location>
        <begin position="1"/>
        <end position="381"/>
    </location>
</feature>
<feature type="transmembrane region" description="Helical" evidence="3">
    <location>
        <begin position="31"/>
        <end position="51"/>
    </location>
</feature>
<feature type="transmembrane region" description="Helical" evidence="3">
    <location>
        <begin position="75"/>
        <end position="97"/>
    </location>
</feature>
<feature type="transmembrane region" description="Helical" evidence="3">
    <location>
        <begin position="112"/>
        <end position="132"/>
    </location>
</feature>
<feature type="transmembrane region" description="Helical" evidence="3">
    <location>
        <begin position="178"/>
        <end position="198"/>
    </location>
</feature>
<feature type="transmembrane region" description="Helical" evidence="3">
    <location>
        <begin position="224"/>
        <end position="244"/>
    </location>
</feature>
<feature type="transmembrane region" description="Helical" evidence="3">
    <location>
        <begin position="288"/>
        <end position="308"/>
    </location>
</feature>
<feature type="transmembrane region" description="Helical" evidence="3">
    <location>
        <begin position="320"/>
        <end position="340"/>
    </location>
</feature>
<feature type="transmembrane region" description="Helical" evidence="3">
    <location>
        <begin position="347"/>
        <end position="367"/>
    </location>
</feature>
<feature type="binding site" description="axial binding residue" evidence="3">
    <location>
        <position position="81"/>
    </location>
    <ligand>
        <name>heme b</name>
        <dbReference type="ChEBI" id="CHEBI:60344"/>
        <label>b562</label>
    </ligand>
    <ligandPart>
        <name>Fe</name>
        <dbReference type="ChEBI" id="CHEBI:18248"/>
    </ligandPart>
</feature>
<feature type="binding site" description="axial binding residue" evidence="3">
    <location>
        <position position="95"/>
    </location>
    <ligand>
        <name>heme b</name>
        <dbReference type="ChEBI" id="CHEBI:60344"/>
        <label>b566</label>
    </ligand>
    <ligandPart>
        <name>Fe</name>
        <dbReference type="ChEBI" id="CHEBI:18248"/>
    </ligandPart>
</feature>
<feature type="binding site" description="axial binding residue" evidence="3">
    <location>
        <position position="182"/>
    </location>
    <ligand>
        <name>heme b</name>
        <dbReference type="ChEBI" id="CHEBI:60344"/>
        <label>b562</label>
    </ligand>
    <ligandPart>
        <name>Fe</name>
        <dbReference type="ChEBI" id="CHEBI:18248"/>
    </ligandPart>
</feature>
<feature type="binding site" description="axial binding residue" evidence="3">
    <location>
        <position position="196"/>
    </location>
    <ligand>
        <name>heme b</name>
        <dbReference type="ChEBI" id="CHEBI:60344"/>
        <label>b566</label>
    </ligand>
    <ligandPart>
        <name>Fe</name>
        <dbReference type="ChEBI" id="CHEBI:18248"/>
    </ligandPart>
</feature>
<feature type="binding site" evidence="2">
    <location>
        <position position="201"/>
    </location>
    <ligand>
        <name>a ubiquinone</name>
        <dbReference type="ChEBI" id="CHEBI:16389"/>
    </ligand>
</feature>
<proteinExistence type="inferred from homology"/>
<name>CYB_CHOCR</name>